<evidence type="ECO:0000255" key="1">
    <source>
        <dbReference type="HAMAP-Rule" id="MF_03184"/>
    </source>
</evidence>
<evidence type="ECO:0000269" key="2">
    <source>
    </source>
</evidence>
<evidence type="ECO:0000269" key="3">
    <source>
    </source>
</evidence>
<evidence type="ECO:0000269" key="4">
    <source>
    </source>
</evidence>
<evidence type="ECO:0000305" key="5">
    <source>
    </source>
</evidence>
<evidence type="ECO:0007829" key="6">
    <source>
        <dbReference type="PDB" id="3OPY"/>
    </source>
</evidence>
<sequence length="989" mass="108804">MPEPSISDLSFTSFVTNDDNLFEETFNFYTKLGFHATRSYVKDNRSDFELTGISTDSIKEIWLESFPLSEVVEASGGRELRKPLQESVGYESEALLGYSPYQSGGVVIKLRLSNHDLEKNNDLPGEVTFFTASIDKLKAKLIEIGAEIIPSKIDLVEFSTRDPMGDVISFSSYPSLNSKKITSPDFFLHPKKEVRSEESIVEQVKSEEGKKKIAIITSGGDAPGMNAAVRAVTRAGIFYGCKVYACYEGYTGLVKGGDMLKELQWQDVRGLLSIGGTIIGTARCKEFRERWGRLQACYNMVSNGIDALVVCGGDGSLTGADLFRKEWPELIKELLGEDKITKEQYETHRNLTIVGLVGSIDNDMCGTDSTIGAYSSLERIIELVDYIDATAASHSRAFVVEVMGRHCGWLGLMSGIATGADYIFIPERPPSESNWKDDLKKVCLRHREKGRRKTTVIVAEGAIDDQLNPITSEEVKDVLVEIGLDTRITRLGHVQRGGAPCAFDRFLATVQGVDAVRAVLESTPAIPSPVISILENKIVRQPLVESVAQTKTVSAAIEAKDFDKALQLRDQEFATSYENFLSVSKYDDGSYLVPESSRLNIAIIHVGAPTSALNPATRVATLNSLAKGHRVFAIRNGFAGLIRHGAVRELNWIDVEDWHNTGGSEIGTNRSLPSDDMGTVAYYFQQYKFDGLIIIGGFEAFTALYELDAARAQYPIFNIPMCCLPATVSNNVPGTEYSLGSDTCLNTLSGYCDAVKQSASASRRRTFVVEVQGGYSGYLASYAGLITGALAVYTPENPINLQTVQEDIELLTRTYEEDDGKNRSGKIFIHNEKASKVYTTDLIAAIIGEAGKGRFESRTAVPGHVQQGKSPSSIDRVNACRLAIKCCNFIEDANFQVKHNANLSADERHLRFFYDDGVKTSAVSGKSSVIDDNTSVVIGIQGSEVTFTPVKQLWENETHHKWRKGKNVHWEQLNIVSDLLSGRLSIRTT</sequence>
<dbReference type="EC" id="2.7.1.11" evidence="1"/>
<dbReference type="EMBL" id="AF508861">
    <property type="protein sequence ID" value="AAM44819.1"/>
    <property type="molecule type" value="Genomic_DNA"/>
</dbReference>
<dbReference type="PDB" id="3OPY">
    <property type="method" value="X-ray"/>
    <property type="resolution" value="3.05 A"/>
    <property type="chains" value="A/C/E/G=1-989"/>
</dbReference>
<dbReference type="PDBsum" id="3OPY"/>
<dbReference type="SMR" id="Q8NJU8"/>
<dbReference type="OrthoDB" id="537915at2759"/>
<dbReference type="SABIO-RK" id="Q8NJU8"/>
<dbReference type="UniPathway" id="UPA00109">
    <property type="reaction ID" value="UER00182"/>
</dbReference>
<dbReference type="EvolutionaryTrace" id="Q8NJU8"/>
<dbReference type="GO" id="GO:0005945">
    <property type="term" value="C:6-phosphofructokinase complex"/>
    <property type="evidence" value="ECO:0007669"/>
    <property type="project" value="TreeGrafter"/>
</dbReference>
<dbReference type="GO" id="GO:0005739">
    <property type="term" value="C:mitochondrion"/>
    <property type="evidence" value="ECO:0007669"/>
    <property type="project" value="TreeGrafter"/>
</dbReference>
<dbReference type="GO" id="GO:0003872">
    <property type="term" value="F:6-phosphofructokinase activity"/>
    <property type="evidence" value="ECO:0007669"/>
    <property type="project" value="UniProtKB-UniRule"/>
</dbReference>
<dbReference type="GO" id="GO:0016208">
    <property type="term" value="F:AMP binding"/>
    <property type="evidence" value="ECO:0007669"/>
    <property type="project" value="TreeGrafter"/>
</dbReference>
<dbReference type="GO" id="GO:0005524">
    <property type="term" value="F:ATP binding"/>
    <property type="evidence" value="ECO:0007669"/>
    <property type="project" value="UniProtKB-KW"/>
</dbReference>
<dbReference type="GO" id="GO:0070095">
    <property type="term" value="F:fructose-6-phosphate binding"/>
    <property type="evidence" value="ECO:0007669"/>
    <property type="project" value="TreeGrafter"/>
</dbReference>
<dbReference type="GO" id="GO:0042802">
    <property type="term" value="F:identical protein binding"/>
    <property type="evidence" value="ECO:0007669"/>
    <property type="project" value="TreeGrafter"/>
</dbReference>
<dbReference type="GO" id="GO:0046872">
    <property type="term" value="F:metal ion binding"/>
    <property type="evidence" value="ECO:0007669"/>
    <property type="project" value="UniProtKB-KW"/>
</dbReference>
<dbReference type="GO" id="GO:0048029">
    <property type="term" value="F:monosaccharide binding"/>
    <property type="evidence" value="ECO:0007669"/>
    <property type="project" value="TreeGrafter"/>
</dbReference>
<dbReference type="GO" id="GO:0061621">
    <property type="term" value="P:canonical glycolysis"/>
    <property type="evidence" value="ECO:0007669"/>
    <property type="project" value="TreeGrafter"/>
</dbReference>
<dbReference type="GO" id="GO:0030388">
    <property type="term" value="P:fructose 1,6-bisphosphate metabolic process"/>
    <property type="evidence" value="ECO:0007669"/>
    <property type="project" value="TreeGrafter"/>
</dbReference>
<dbReference type="GO" id="GO:0006002">
    <property type="term" value="P:fructose 6-phosphate metabolic process"/>
    <property type="evidence" value="ECO:0007669"/>
    <property type="project" value="InterPro"/>
</dbReference>
<dbReference type="FunFam" id="3.40.50.460:FF:000007">
    <property type="entry name" value="ATP-dependent 6-phosphofructokinase"/>
    <property type="match status" value="1"/>
</dbReference>
<dbReference type="FunFam" id="3.40.50.460:FF:000008">
    <property type="entry name" value="ATP-dependent 6-phosphofructokinase"/>
    <property type="match status" value="1"/>
</dbReference>
<dbReference type="Gene3D" id="3.10.180.90">
    <property type="match status" value="1"/>
</dbReference>
<dbReference type="Gene3D" id="3.40.50.450">
    <property type="match status" value="2"/>
</dbReference>
<dbReference type="Gene3D" id="3.40.50.460">
    <property type="entry name" value="Phosphofructokinase domain"/>
    <property type="match status" value="2"/>
</dbReference>
<dbReference type="HAMAP" id="MF_03184">
    <property type="entry name" value="Phosphofructokinase_I_E"/>
    <property type="match status" value="1"/>
</dbReference>
<dbReference type="InterPro" id="IPR009161">
    <property type="entry name" value="6-Pfructokinase_euk"/>
</dbReference>
<dbReference type="InterPro" id="IPR022953">
    <property type="entry name" value="ATP_PFK"/>
</dbReference>
<dbReference type="InterPro" id="IPR040712">
    <property type="entry name" value="Pfk_N"/>
</dbReference>
<dbReference type="InterPro" id="IPR015912">
    <property type="entry name" value="Phosphofructokinase_CS"/>
</dbReference>
<dbReference type="InterPro" id="IPR000023">
    <property type="entry name" value="Phosphofructokinase_dom"/>
</dbReference>
<dbReference type="InterPro" id="IPR035966">
    <property type="entry name" value="PKF_sf"/>
</dbReference>
<dbReference type="NCBIfam" id="TIGR02478">
    <property type="entry name" value="6PF1K_euk"/>
    <property type="match status" value="1"/>
</dbReference>
<dbReference type="PANTHER" id="PTHR13697:SF57">
    <property type="entry name" value="ATP-DEPENDENT 6-PHOSPHOFRUCTOKINASE SUBUNIT ALPHA"/>
    <property type="match status" value="1"/>
</dbReference>
<dbReference type="PANTHER" id="PTHR13697">
    <property type="entry name" value="PHOSPHOFRUCTOKINASE"/>
    <property type="match status" value="1"/>
</dbReference>
<dbReference type="Pfam" id="PF00365">
    <property type="entry name" value="PFK"/>
    <property type="match status" value="2"/>
</dbReference>
<dbReference type="Pfam" id="PF18468">
    <property type="entry name" value="Pfk_N"/>
    <property type="match status" value="1"/>
</dbReference>
<dbReference type="PIRSF" id="PIRSF000533">
    <property type="entry name" value="ATP_PFK_euk"/>
    <property type="match status" value="1"/>
</dbReference>
<dbReference type="PRINTS" id="PR00476">
    <property type="entry name" value="PHFRCTKINASE"/>
</dbReference>
<dbReference type="SUPFAM" id="SSF53784">
    <property type="entry name" value="Phosphofructokinase"/>
    <property type="match status" value="2"/>
</dbReference>
<dbReference type="PROSITE" id="PS00433">
    <property type="entry name" value="PHOSPHOFRUCTOKINASE"/>
    <property type="match status" value="1"/>
</dbReference>
<feature type="chain" id="PRO_0000429715" description="ATP-dependent 6-phosphofructokinase subunit alpha">
    <location>
        <begin position="1"/>
        <end position="989"/>
    </location>
</feature>
<feature type="region of interest" description="N-terminal catalytic PFK domain 1" evidence="1 5">
    <location>
        <begin position="1"/>
        <end position="585"/>
    </location>
</feature>
<feature type="region of interest" description="Interdomain linker" evidence="1 5">
    <location>
        <begin position="586"/>
        <end position="599"/>
    </location>
</feature>
<feature type="region of interest" description="C-terminal regulatory PFK domain 2" evidence="1 5">
    <location>
        <begin position="600"/>
        <end position="989"/>
    </location>
</feature>
<feature type="active site" description="Proton acceptor" evidence="1">
    <location>
        <position position="361"/>
    </location>
</feature>
<feature type="binding site" evidence="1">
    <location>
        <position position="220"/>
    </location>
    <ligand>
        <name>ATP</name>
        <dbReference type="ChEBI" id="CHEBI:30616"/>
    </ligand>
</feature>
<feature type="binding site" evidence="1">
    <location>
        <begin position="283"/>
        <end position="284"/>
    </location>
    <ligand>
        <name>ATP</name>
        <dbReference type="ChEBI" id="CHEBI:30616"/>
    </ligand>
</feature>
<feature type="binding site" evidence="1">
    <location>
        <begin position="313"/>
        <end position="316"/>
    </location>
    <ligand>
        <name>ATP</name>
        <dbReference type="ChEBI" id="CHEBI:30616"/>
    </ligand>
</feature>
<feature type="binding site" evidence="1">
    <location>
        <position position="314"/>
    </location>
    <ligand>
        <name>Mg(2+)</name>
        <dbReference type="ChEBI" id="CHEBI:18420"/>
        <note>catalytic</note>
    </ligand>
</feature>
<feature type="binding site" evidence="1">
    <location>
        <begin position="359"/>
        <end position="361"/>
    </location>
    <ligand>
        <name>beta-D-fructose 6-phosphate</name>
        <dbReference type="ChEBI" id="CHEBI:57634"/>
        <label>1</label>
        <note>ligand shared with subunit beta</note>
    </ligand>
</feature>
<feature type="binding site" evidence="1">
    <location>
        <position position="396"/>
    </location>
    <ligand>
        <name>beta-D-fructose 6-phosphate</name>
        <dbReference type="ChEBI" id="CHEBI:57634"/>
        <label>2</label>
        <note>ligand shared with subunit beta</note>
    </ligand>
</feature>
<feature type="binding site" evidence="1">
    <location>
        <begin position="403"/>
        <end position="405"/>
    </location>
    <ligand>
        <name>beta-D-fructose 6-phosphate</name>
        <dbReference type="ChEBI" id="CHEBI:57634"/>
        <label>1</label>
        <note>ligand shared with subunit beta</note>
    </ligand>
</feature>
<feature type="binding site" evidence="1">
    <location>
        <position position="460"/>
    </location>
    <ligand>
        <name>beta-D-fructose 6-phosphate</name>
        <dbReference type="ChEBI" id="CHEBI:57634"/>
        <label>1</label>
        <note>ligand shared with subunit beta</note>
    </ligand>
</feature>
<feature type="binding site" evidence="1">
    <location>
        <position position="487"/>
    </location>
    <ligand>
        <name>beta-D-fructose 6-phosphate</name>
        <dbReference type="ChEBI" id="CHEBI:57634"/>
        <label>2</label>
        <note>ligand shared with subunit beta</note>
    </ligand>
</feature>
<feature type="binding site" evidence="1">
    <location>
        <begin position="493"/>
        <end position="496"/>
    </location>
    <ligand>
        <name>beta-D-fructose 6-phosphate</name>
        <dbReference type="ChEBI" id="CHEBI:57634"/>
        <label>1</label>
        <note>ligand shared with subunit beta</note>
    </ligand>
</feature>
<feature type="binding site" evidence="1">
    <location>
        <position position="670"/>
    </location>
    <ligand>
        <name>beta-D-fructose 2,6-bisphosphate</name>
        <dbReference type="ChEBI" id="CHEBI:58579"/>
        <label>1</label>
        <note>allosteric activator; ligand shared with subunit beta</note>
    </ligand>
</feature>
<feature type="binding site" evidence="1">
    <location>
        <begin position="727"/>
        <end position="731"/>
    </location>
    <ligand>
        <name>beta-D-fructose 2,6-bisphosphate</name>
        <dbReference type="ChEBI" id="CHEBI:58579"/>
        <label>1</label>
        <note>allosteric activator; ligand shared with subunit beta</note>
    </ligand>
</feature>
<feature type="binding site" evidence="1">
    <location>
        <position position="765"/>
    </location>
    <ligand>
        <name>beta-D-fructose 2,6-bisphosphate</name>
        <dbReference type="ChEBI" id="CHEBI:58579"/>
        <label>2</label>
        <note>allosteric activator; ligand shared with subunit beta</note>
    </ligand>
</feature>
<feature type="binding site" evidence="1">
    <location>
        <begin position="772"/>
        <end position="774"/>
    </location>
    <ligand>
        <name>beta-D-fructose 2,6-bisphosphate</name>
        <dbReference type="ChEBI" id="CHEBI:58579"/>
        <label>1</label>
        <note>allosteric activator; ligand shared with subunit beta</note>
    </ligand>
</feature>
<feature type="binding site" evidence="1">
    <location>
        <position position="832"/>
    </location>
    <ligand>
        <name>beta-D-fructose 2,6-bisphosphate</name>
        <dbReference type="ChEBI" id="CHEBI:58579"/>
        <label>1</label>
        <note>allosteric activator; ligand shared with subunit beta</note>
    </ligand>
</feature>
<feature type="binding site" evidence="1">
    <location>
        <position position="858"/>
    </location>
    <ligand>
        <name>beta-D-fructose 2,6-bisphosphate</name>
        <dbReference type="ChEBI" id="CHEBI:58579"/>
        <label>2</label>
        <note>allosteric activator; ligand shared with subunit beta</note>
    </ligand>
</feature>
<feature type="binding site" evidence="1">
    <location>
        <begin position="864"/>
        <end position="867"/>
    </location>
    <ligand>
        <name>beta-D-fructose 2,6-bisphosphate</name>
        <dbReference type="ChEBI" id="CHEBI:58579"/>
        <label>1</label>
        <note>allosteric activator; ligand shared with subunit beta</note>
    </ligand>
</feature>
<feature type="binding site" evidence="1">
    <location>
        <position position="963"/>
    </location>
    <ligand>
        <name>beta-D-fructose 2,6-bisphosphate</name>
        <dbReference type="ChEBI" id="CHEBI:58579"/>
        <label>1</label>
        <note>allosteric activator; ligand shared with subunit beta</note>
    </ligand>
</feature>
<feature type="strand" evidence="6">
    <location>
        <begin position="6"/>
        <end position="17"/>
    </location>
</feature>
<feature type="helix" evidence="6">
    <location>
        <begin position="19"/>
        <end position="31"/>
    </location>
</feature>
<feature type="strand" evidence="6">
    <location>
        <begin position="35"/>
        <end position="41"/>
    </location>
</feature>
<feature type="strand" evidence="6">
    <location>
        <begin position="58"/>
        <end position="64"/>
    </location>
</feature>
<feature type="strand" evidence="6">
    <location>
        <begin position="94"/>
        <end position="96"/>
    </location>
</feature>
<feature type="strand" evidence="6">
    <location>
        <begin position="105"/>
        <end position="110"/>
    </location>
</feature>
<feature type="strand" evidence="6">
    <location>
        <begin position="126"/>
        <end position="130"/>
    </location>
</feature>
<feature type="helix" evidence="6">
    <location>
        <begin position="134"/>
        <end position="143"/>
    </location>
</feature>
<feature type="strand" evidence="6">
    <location>
        <begin position="158"/>
        <end position="169"/>
    </location>
</feature>
<feature type="strand" evidence="6">
    <location>
        <begin position="172"/>
        <end position="174"/>
    </location>
</feature>
<feature type="strand" evidence="6">
    <location>
        <begin position="210"/>
        <end position="217"/>
    </location>
</feature>
<feature type="helix" evidence="6">
    <location>
        <begin position="225"/>
        <end position="238"/>
    </location>
</feature>
<feature type="strand" evidence="6">
    <location>
        <begin position="241"/>
        <end position="246"/>
    </location>
</feature>
<feature type="helix" evidence="6">
    <location>
        <begin position="249"/>
        <end position="254"/>
    </location>
</feature>
<feature type="strand" evidence="6">
    <location>
        <begin position="260"/>
        <end position="263"/>
    </location>
</feature>
<feature type="turn" evidence="6">
    <location>
        <begin position="265"/>
        <end position="270"/>
    </location>
</feature>
<feature type="helix" evidence="6">
    <location>
        <begin position="271"/>
        <end position="273"/>
    </location>
</feature>
<feature type="strand" evidence="6">
    <location>
        <begin position="284"/>
        <end position="286"/>
    </location>
</feature>
<feature type="helix" evidence="6">
    <location>
        <begin position="290"/>
        <end position="302"/>
    </location>
</feature>
<feature type="strand" evidence="6">
    <location>
        <begin position="307"/>
        <end position="312"/>
    </location>
</feature>
<feature type="helix" evidence="6">
    <location>
        <begin position="314"/>
        <end position="326"/>
    </location>
</feature>
<feature type="helix" evidence="6">
    <location>
        <begin position="343"/>
        <end position="347"/>
    </location>
</feature>
<feature type="strand" evidence="6">
    <location>
        <begin position="352"/>
        <end position="361"/>
    </location>
</feature>
<feature type="helix" evidence="6">
    <location>
        <begin position="373"/>
        <end position="388"/>
    </location>
</feature>
<feature type="strand" evidence="6">
    <location>
        <begin position="396"/>
        <end position="401"/>
    </location>
</feature>
<feature type="helix" evidence="6">
    <location>
        <begin position="409"/>
        <end position="418"/>
    </location>
</feature>
<feature type="strand" evidence="6">
    <location>
        <begin position="421"/>
        <end position="424"/>
    </location>
</feature>
<feature type="turn" evidence="6">
    <location>
        <begin position="432"/>
        <end position="434"/>
    </location>
</feature>
<feature type="helix" evidence="6">
    <location>
        <begin position="435"/>
        <end position="448"/>
    </location>
</feature>
<feature type="strand" evidence="6">
    <location>
        <begin position="453"/>
        <end position="458"/>
    </location>
</feature>
<feature type="helix" evidence="6">
    <location>
        <begin position="472"/>
        <end position="480"/>
    </location>
</feature>
<feature type="turn" evidence="6">
    <location>
        <begin position="481"/>
        <end position="483"/>
    </location>
</feature>
<feature type="strand" evidence="6">
    <location>
        <begin position="485"/>
        <end position="490"/>
    </location>
</feature>
<feature type="helix" evidence="6">
    <location>
        <begin position="492"/>
        <end position="496"/>
    </location>
</feature>
<feature type="helix" evidence="6">
    <location>
        <begin position="502"/>
        <end position="520"/>
    </location>
</feature>
<feature type="strand" evidence="6">
    <location>
        <begin position="529"/>
        <end position="542"/>
    </location>
</feature>
<feature type="helix" evidence="6">
    <location>
        <begin position="543"/>
        <end position="558"/>
    </location>
</feature>
<feature type="helix" evidence="6">
    <location>
        <begin position="562"/>
        <end position="567"/>
    </location>
</feature>
<feature type="helix" evidence="6">
    <location>
        <begin position="571"/>
        <end position="584"/>
    </location>
</feature>
<feature type="helix" evidence="6">
    <location>
        <begin position="585"/>
        <end position="588"/>
    </location>
</feature>
<feature type="strand" evidence="6">
    <location>
        <begin position="589"/>
        <end position="591"/>
    </location>
</feature>
<feature type="helix" evidence="6">
    <location>
        <begin position="595"/>
        <end position="597"/>
    </location>
</feature>
<feature type="strand" evidence="6">
    <location>
        <begin position="600"/>
        <end position="608"/>
    </location>
</feature>
<feature type="helix" evidence="6">
    <location>
        <begin position="613"/>
        <end position="626"/>
    </location>
</feature>
<feature type="strand" evidence="6">
    <location>
        <begin position="630"/>
        <end position="634"/>
    </location>
</feature>
<feature type="helix" evidence="6">
    <location>
        <begin position="637"/>
        <end position="644"/>
    </location>
</feature>
<feature type="strand" evidence="6">
    <location>
        <begin position="647"/>
        <end position="650"/>
    </location>
</feature>
<feature type="turn" evidence="6">
    <location>
        <begin position="652"/>
        <end position="660"/>
    </location>
</feature>
<feature type="helix" evidence="6">
    <location>
        <begin position="673"/>
        <end position="676"/>
    </location>
</feature>
<feature type="helix" evidence="6">
    <location>
        <begin position="677"/>
        <end position="687"/>
    </location>
</feature>
<feature type="strand" evidence="6">
    <location>
        <begin position="690"/>
        <end position="697"/>
    </location>
</feature>
<feature type="helix" evidence="6">
    <location>
        <begin position="698"/>
        <end position="710"/>
    </location>
</feature>
<feature type="turn" evidence="6">
    <location>
        <begin position="711"/>
        <end position="713"/>
    </location>
</feature>
<feature type="helix" evidence="6">
    <location>
        <begin position="715"/>
        <end position="717"/>
    </location>
</feature>
<feature type="strand" evidence="6">
    <location>
        <begin position="721"/>
        <end position="726"/>
    </location>
</feature>
<feature type="helix" evidence="6">
    <location>
        <begin position="741"/>
        <end position="758"/>
    </location>
</feature>
<feature type="strand" evidence="6">
    <location>
        <begin position="765"/>
        <end position="771"/>
    </location>
</feature>
<feature type="helix" evidence="6">
    <location>
        <begin position="778"/>
        <end position="787"/>
    </location>
</feature>
<feature type="helix" evidence="6">
    <location>
        <begin position="801"/>
        <end position="815"/>
    </location>
</feature>
<feature type="strand" evidence="6">
    <location>
        <begin position="826"/>
        <end position="834"/>
    </location>
</feature>
<feature type="strand" evidence="6">
    <location>
        <begin position="836"/>
        <end position="838"/>
    </location>
</feature>
<feature type="helix" evidence="6">
    <location>
        <begin position="840"/>
        <end position="849"/>
    </location>
</feature>
<feature type="turn" evidence="6">
    <location>
        <begin position="850"/>
        <end position="854"/>
    </location>
</feature>
<feature type="strand" evidence="6">
    <location>
        <begin position="857"/>
        <end position="860"/>
    </location>
</feature>
<feature type="helix" evidence="6">
    <location>
        <begin position="863"/>
        <end position="867"/>
    </location>
</feature>
<feature type="helix" evidence="6">
    <location>
        <begin position="873"/>
        <end position="890"/>
    </location>
</feature>
<feature type="helix" evidence="6">
    <location>
        <begin position="893"/>
        <end position="895"/>
    </location>
</feature>
<feature type="strand" evidence="6">
    <location>
        <begin position="899"/>
        <end position="901"/>
    </location>
</feature>
<feature type="helix" evidence="6">
    <location>
        <begin position="905"/>
        <end position="910"/>
    </location>
</feature>
<feature type="strand" evidence="6">
    <location>
        <begin position="912"/>
        <end position="915"/>
    </location>
</feature>
<feature type="strand" evidence="6">
    <location>
        <begin position="918"/>
        <end position="921"/>
    </location>
</feature>
<feature type="turn" evidence="6">
    <location>
        <begin position="922"/>
        <end position="924"/>
    </location>
</feature>
<feature type="helix" evidence="6">
    <location>
        <begin position="932"/>
        <end position="934"/>
    </location>
</feature>
<feature type="strand" evidence="6">
    <location>
        <begin position="935"/>
        <end position="941"/>
    </location>
</feature>
<feature type="strand" evidence="6">
    <location>
        <begin position="944"/>
        <end position="949"/>
    </location>
</feature>
<feature type="helix" evidence="6">
    <location>
        <begin position="950"/>
        <end position="956"/>
    </location>
</feature>
<feature type="turn" evidence="6">
    <location>
        <begin position="959"/>
        <end position="961"/>
    </location>
</feature>
<feature type="helix" evidence="6">
    <location>
        <begin position="971"/>
        <end position="980"/>
    </location>
</feature>
<feature type="helix" evidence="6">
    <location>
        <begin position="983"/>
        <end position="986"/>
    </location>
</feature>
<reference key="1">
    <citation type="journal article" date="2007" name="J. Biol. Chem.">
        <title>A novel form of 6-phosphofructokinase. Identification and functional relevance of a third type of subunit in Pichia pastoris.</title>
        <authorList>
            <person name="Tanneberger K."/>
            <person name="Kirchberger J."/>
            <person name="Baer J."/>
            <person name="Schellenberger W."/>
            <person name="Rothemund S."/>
            <person name="Kamprad M."/>
            <person name="Otto H."/>
            <person name="Schoeneberg T."/>
            <person name="Edelmann A."/>
        </authorList>
    </citation>
    <scope>NUCLEOTIDE SEQUENCE [GENOMIC DNA]</scope>
    <scope>SUBUNIT</scope>
    <scope>SUBCELLULAR LOCATION</scope>
    <source>
        <strain>MH458</strain>
    </source>
</reference>
<reference key="2">
    <citation type="journal article" date="2002" name="Yeast">
        <title>6-phosphofructokinase from Pichia pastoris: purification, kinetic and molecular characterization of the enzyme.</title>
        <authorList>
            <person name="Kirchberger J."/>
            <person name="Baer J."/>
            <person name="Schellenberger W."/>
            <person name="Dihazi H."/>
            <person name="Kopperschlaeger G."/>
        </authorList>
    </citation>
    <scope>FUNCTION</scope>
    <scope>CATALYTIC ACTIVITY</scope>
    <scope>BIOPHYSICOCHEMICAL PROPERTIES</scope>
    <scope>ACTIVITY REGULATION</scope>
    <scope>SUBUNIT</scope>
    <source>
        <strain>ATCC 28485 / BCRC 21531 / CBS 704 / DSM 70382 / JCM 3650 / NBRC 10777 / NRRLY-1603</strain>
    </source>
</reference>
<reference key="3">
    <citation type="journal article" date="2009" name="J. Struct. Biol.">
        <title>3D structure of phosphofructokinase from Pichia pastoris: Localization of the novel gamma-subunits.</title>
        <authorList>
            <person name="Benjamin S."/>
            <person name="Radermacher M."/>
            <person name="Kirchberger J."/>
            <person name="Schoeneberg T."/>
            <person name="Edelmann A."/>
            <person name="Ruiz T."/>
        </authorList>
    </citation>
    <scope>STRUCTURE BY ELECTRON MICROSCOPY</scope>
    <scope>SUBUNIT</scope>
</reference>
<reference key="4">
    <citation type="journal article" date="2011" name="FASEB J.">
        <title>Molecular architecture and structural basis of allosteric regulation of eukaryotic phosphofructokinases.</title>
        <authorList>
            <person name="Straeter N."/>
            <person name="Marek S."/>
            <person name="Kuettner E.B."/>
            <person name="Kloos M."/>
            <person name="Keim A."/>
            <person name="Brueser A."/>
            <person name="Kirchberger J."/>
            <person name="Schoeneberg T."/>
        </authorList>
    </citation>
    <scope>X-RAY CRYSTALLOGRAPHY (3.05 ANGSTROMS)</scope>
</reference>
<comment type="function">
    <text evidence="1 2">Catalyzes the phosphorylation of D-fructose 6-phosphate to fructose 1,6-bisphosphate by ATP, the first committing step of glycolysis.</text>
</comment>
<comment type="catalytic activity">
    <reaction evidence="1 2">
        <text>beta-D-fructose 6-phosphate + ATP = beta-D-fructose 1,6-bisphosphate + ADP + H(+)</text>
        <dbReference type="Rhea" id="RHEA:16109"/>
        <dbReference type="ChEBI" id="CHEBI:15378"/>
        <dbReference type="ChEBI" id="CHEBI:30616"/>
        <dbReference type="ChEBI" id="CHEBI:32966"/>
        <dbReference type="ChEBI" id="CHEBI:57634"/>
        <dbReference type="ChEBI" id="CHEBI:456216"/>
        <dbReference type="EC" id="2.7.1.11"/>
    </reaction>
</comment>
<comment type="cofactor">
    <cofactor evidence="1">
        <name>Mg(2+)</name>
        <dbReference type="ChEBI" id="CHEBI:18420"/>
    </cofactor>
</comment>
<comment type="activity regulation">
    <text evidence="1 2">Allosterically activated by ADP, AMP, or fructose 2,6-bisphosphate, and allosterically inhibited by ATP or citrate.</text>
</comment>
<comment type="biophysicochemical properties">
    <kinetics>
        <KM evidence="2">6.971 mM for D-fructose 6-phosphate</KM>
    </kinetics>
</comment>
<comment type="pathway">
    <text evidence="1">Carbohydrate degradation; glycolysis; D-glyceraldehyde 3-phosphate and glycerone phosphate from D-glucose: step 3/4.</text>
</comment>
<comment type="subunit">
    <text evidence="2 3 4">Heterododecamer of 4 alpha, 4 beta and 4 gamma chains.</text>
</comment>
<comment type="subcellular location">
    <subcellularLocation>
        <location evidence="1 3">Cytoplasm</location>
    </subcellularLocation>
</comment>
<comment type="similarity">
    <text evidence="1">Belongs to the phosphofructokinase type A (PFKA) family. ATP-dependent PFK group I subfamily. Eukaryotic two domain clade 'E' sub-subfamily.</text>
</comment>
<organism>
    <name type="scientific">Komagataella pastoris</name>
    <name type="common">Yeast</name>
    <name type="synonym">Pichia pastoris</name>
    <dbReference type="NCBI Taxonomy" id="4922"/>
    <lineage>
        <taxon>Eukaryota</taxon>
        <taxon>Fungi</taxon>
        <taxon>Dikarya</taxon>
        <taxon>Ascomycota</taxon>
        <taxon>Saccharomycotina</taxon>
        <taxon>Pichiomycetes</taxon>
        <taxon>Pichiales</taxon>
        <taxon>Pichiaceae</taxon>
        <taxon>Komagataella</taxon>
    </lineage>
</organism>
<gene>
    <name type="primary">PFK1</name>
</gene>
<proteinExistence type="evidence at protein level"/>
<accession>Q8NJU8</accession>
<protein>
    <recommendedName>
        <fullName evidence="1">ATP-dependent 6-phosphofructokinase subunit alpha</fullName>
        <ecNumber evidence="1">2.7.1.11</ecNumber>
    </recommendedName>
    <alternativeName>
        <fullName evidence="1">ATP-dependent 6-phosphofructokinase 1</fullName>
        <shortName evidence="1">ATP-PFK 1</shortName>
        <shortName evidence="1">Phosphofructokinase 1</shortName>
    </alternativeName>
    <alternativeName>
        <fullName evidence="1">Phosphohexokinase 1</fullName>
    </alternativeName>
</protein>
<keyword id="KW-0002">3D-structure</keyword>
<keyword id="KW-0021">Allosteric enzyme</keyword>
<keyword id="KW-0067">ATP-binding</keyword>
<keyword id="KW-0963">Cytoplasm</keyword>
<keyword id="KW-0324">Glycolysis</keyword>
<keyword id="KW-0418">Kinase</keyword>
<keyword id="KW-0460">Magnesium</keyword>
<keyword id="KW-0479">Metal-binding</keyword>
<keyword id="KW-0547">Nucleotide-binding</keyword>
<keyword id="KW-0808">Transferase</keyword>
<name>PFKA1_PICPA</name>